<protein>
    <recommendedName>
        <fullName evidence="1">Pantothenate synthetase</fullName>
        <shortName evidence="1">PS</shortName>
        <ecNumber evidence="1">6.3.2.1</ecNumber>
    </recommendedName>
    <alternativeName>
        <fullName evidence="1">Pantoate--beta-alanine ligase</fullName>
    </alternativeName>
    <alternativeName>
        <fullName evidence="1">Pantoate-activating enzyme</fullName>
    </alternativeName>
</protein>
<organism>
    <name type="scientific">Bacillus thuringiensis subsp. konkukian (strain 97-27)</name>
    <dbReference type="NCBI Taxonomy" id="281309"/>
    <lineage>
        <taxon>Bacteria</taxon>
        <taxon>Bacillati</taxon>
        <taxon>Bacillota</taxon>
        <taxon>Bacilli</taxon>
        <taxon>Bacillales</taxon>
        <taxon>Bacillaceae</taxon>
        <taxon>Bacillus</taxon>
        <taxon>Bacillus cereus group</taxon>
    </lineage>
</organism>
<accession>Q6HL15</accession>
<dbReference type="EC" id="6.3.2.1" evidence="1"/>
<dbReference type="EMBL" id="AE017355">
    <property type="protein sequence ID" value="AAT63199.1"/>
    <property type="molecule type" value="Genomic_DNA"/>
</dbReference>
<dbReference type="RefSeq" id="WP_000706997.1">
    <property type="nucleotide sequence ID" value="NC_005957.1"/>
</dbReference>
<dbReference type="RefSeq" id="YP_035756.1">
    <property type="nucleotide sequence ID" value="NC_005957.1"/>
</dbReference>
<dbReference type="SMR" id="Q6HL15"/>
<dbReference type="KEGG" id="btk:BT9727_1422"/>
<dbReference type="PATRIC" id="fig|281309.8.peg.1494"/>
<dbReference type="HOGENOM" id="CLU_047148_0_0_9"/>
<dbReference type="UniPathway" id="UPA00028">
    <property type="reaction ID" value="UER00005"/>
</dbReference>
<dbReference type="Proteomes" id="UP000001301">
    <property type="component" value="Chromosome"/>
</dbReference>
<dbReference type="GO" id="GO:0005829">
    <property type="term" value="C:cytosol"/>
    <property type="evidence" value="ECO:0007669"/>
    <property type="project" value="TreeGrafter"/>
</dbReference>
<dbReference type="GO" id="GO:0005524">
    <property type="term" value="F:ATP binding"/>
    <property type="evidence" value="ECO:0007669"/>
    <property type="project" value="UniProtKB-KW"/>
</dbReference>
<dbReference type="GO" id="GO:0004592">
    <property type="term" value="F:pantoate-beta-alanine ligase activity"/>
    <property type="evidence" value="ECO:0007669"/>
    <property type="project" value="UniProtKB-UniRule"/>
</dbReference>
<dbReference type="GO" id="GO:0015940">
    <property type="term" value="P:pantothenate biosynthetic process"/>
    <property type="evidence" value="ECO:0007669"/>
    <property type="project" value="UniProtKB-UniRule"/>
</dbReference>
<dbReference type="CDD" id="cd00560">
    <property type="entry name" value="PanC"/>
    <property type="match status" value="1"/>
</dbReference>
<dbReference type="FunFam" id="3.30.1300.10:FF:000001">
    <property type="entry name" value="Pantothenate synthetase"/>
    <property type="match status" value="1"/>
</dbReference>
<dbReference type="FunFam" id="3.40.50.620:FF:000013">
    <property type="entry name" value="Pantothenate synthetase"/>
    <property type="match status" value="1"/>
</dbReference>
<dbReference type="Gene3D" id="3.40.50.620">
    <property type="entry name" value="HUPs"/>
    <property type="match status" value="1"/>
</dbReference>
<dbReference type="Gene3D" id="3.30.1300.10">
    <property type="entry name" value="Pantoate-beta-alanine ligase, C-terminal domain"/>
    <property type="match status" value="1"/>
</dbReference>
<dbReference type="HAMAP" id="MF_00158">
    <property type="entry name" value="PanC"/>
    <property type="match status" value="1"/>
</dbReference>
<dbReference type="InterPro" id="IPR004821">
    <property type="entry name" value="Cyt_trans-like"/>
</dbReference>
<dbReference type="InterPro" id="IPR003721">
    <property type="entry name" value="Pantoate_ligase"/>
</dbReference>
<dbReference type="InterPro" id="IPR042176">
    <property type="entry name" value="Pantoate_ligase_C"/>
</dbReference>
<dbReference type="InterPro" id="IPR014729">
    <property type="entry name" value="Rossmann-like_a/b/a_fold"/>
</dbReference>
<dbReference type="NCBIfam" id="TIGR00125">
    <property type="entry name" value="cyt_tran_rel"/>
    <property type="match status" value="1"/>
</dbReference>
<dbReference type="NCBIfam" id="TIGR00018">
    <property type="entry name" value="panC"/>
    <property type="match status" value="1"/>
</dbReference>
<dbReference type="PANTHER" id="PTHR21299">
    <property type="entry name" value="CYTIDYLATE KINASE/PANTOATE-BETA-ALANINE LIGASE"/>
    <property type="match status" value="1"/>
</dbReference>
<dbReference type="PANTHER" id="PTHR21299:SF1">
    <property type="entry name" value="PANTOATE--BETA-ALANINE LIGASE"/>
    <property type="match status" value="1"/>
</dbReference>
<dbReference type="Pfam" id="PF02569">
    <property type="entry name" value="Pantoate_ligase"/>
    <property type="match status" value="1"/>
</dbReference>
<dbReference type="SUPFAM" id="SSF52374">
    <property type="entry name" value="Nucleotidylyl transferase"/>
    <property type="match status" value="1"/>
</dbReference>
<proteinExistence type="inferred from homology"/>
<sequence>MKIVTTVQEMQHITKELRASGKSIGFVPTMGYLHEGHATLLRKAREENEIVVLSVFVNPLQFGPNEDLDRYPRDIDRDENVAKENGVDYLFYPSVEEMYPAEQTTTVEVVKRTDVLCGKQRPGHFAGVATVLMKLFNITLPTRAYFGMKDAQQVAVIEGFVADFNIPVIIVPVDIVREEDGLAKSSRNVYLSQEERKEAPHLYRSLCMAKERIEAGERNAEIITTLVKEYIETYTKGTVDYADLYAYPSLQVVDQIEGRIILAIAVKFENVRLIDNITLTVK</sequence>
<name>PANC_BACHK</name>
<gene>
    <name evidence="1" type="primary">panC</name>
    <name type="ordered locus">BT9727_1422</name>
</gene>
<comment type="function">
    <text evidence="1">Catalyzes the condensation of pantoate with beta-alanine in an ATP-dependent reaction via a pantoyl-adenylate intermediate.</text>
</comment>
<comment type="catalytic activity">
    <reaction evidence="1">
        <text>(R)-pantoate + beta-alanine + ATP = (R)-pantothenate + AMP + diphosphate + H(+)</text>
        <dbReference type="Rhea" id="RHEA:10912"/>
        <dbReference type="ChEBI" id="CHEBI:15378"/>
        <dbReference type="ChEBI" id="CHEBI:15980"/>
        <dbReference type="ChEBI" id="CHEBI:29032"/>
        <dbReference type="ChEBI" id="CHEBI:30616"/>
        <dbReference type="ChEBI" id="CHEBI:33019"/>
        <dbReference type="ChEBI" id="CHEBI:57966"/>
        <dbReference type="ChEBI" id="CHEBI:456215"/>
        <dbReference type="EC" id="6.3.2.1"/>
    </reaction>
</comment>
<comment type="pathway">
    <text evidence="1">Cofactor biosynthesis; (R)-pantothenate biosynthesis; (R)-pantothenate from (R)-pantoate and beta-alanine: step 1/1.</text>
</comment>
<comment type="subunit">
    <text evidence="1">Homodimer.</text>
</comment>
<comment type="subcellular location">
    <subcellularLocation>
        <location evidence="1">Cytoplasm</location>
    </subcellularLocation>
</comment>
<comment type="miscellaneous">
    <text evidence="1">The reaction proceeds by a bi uni uni bi ping pong mechanism.</text>
</comment>
<comment type="similarity">
    <text evidence="1">Belongs to the pantothenate synthetase family.</text>
</comment>
<feature type="chain" id="PRO_0000128205" description="Pantothenate synthetase">
    <location>
        <begin position="1"/>
        <end position="282"/>
    </location>
</feature>
<feature type="active site" description="Proton donor" evidence="1">
    <location>
        <position position="37"/>
    </location>
</feature>
<feature type="binding site" evidence="1">
    <location>
        <begin position="30"/>
        <end position="37"/>
    </location>
    <ligand>
        <name>ATP</name>
        <dbReference type="ChEBI" id="CHEBI:30616"/>
    </ligand>
</feature>
<feature type="binding site" evidence="1">
    <location>
        <position position="61"/>
    </location>
    <ligand>
        <name>(R)-pantoate</name>
        <dbReference type="ChEBI" id="CHEBI:15980"/>
    </ligand>
</feature>
<feature type="binding site" evidence="1">
    <location>
        <position position="61"/>
    </location>
    <ligand>
        <name>beta-alanine</name>
        <dbReference type="ChEBI" id="CHEBI:57966"/>
    </ligand>
</feature>
<feature type="binding site" evidence="1">
    <location>
        <begin position="147"/>
        <end position="150"/>
    </location>
    <ligand>
        <name>ATP</name>
        <dbReference type="ChEBI" id="CHEBI:30616"/>
    </ligand>
</feature>
<feature type="binding site" evidence="1">
    <location>
        <position position="153"/>
    </location>
    <ligand>
        <name>(R)-pantoate</name>
        <dbReference type="ChEBI" id="CHEBI:15980"/>
    </ligand>
</feature>
<feature type="binding site" evidence="1">
    <location>
        <position position="176"/>
    </location>
    <ligand>
        <name>ATP</name>
        <dbReference type="ChEBI" id="CHEBI:30616"/>
    </ligand>
</feature>
<feature type="binding site" evidence="1">
    <location>
        <begin position="184"/>
        <end position="187"/>
    </location>
    <ligand>
        <name>ATP</name>
        <dbReference type="ChEBI" id="CHEBI:30616"/>
    </ligand>
</feature>
<reference key="1">
    <citation type="journal article" date="2006" name="J. Bacteriol.">
        <title>Pathogenomic sequence analysis of Bacillus cereus and Bacillus thuringiensis isolates closely related to Bacillus anthracis.</title>
        <authorList>
            <person name="Han C.S."/>
            <person name="Xie G."/>
            <person name="Challacombe J.F."/>
            <person name="Altherr M.R."/>
            <person name="Bhotika S.S."/>
            <person name="Bruce D."/>
            <person name="Campbell C.S."/>
            <person name="Campbell M.L."/>
            <person name="Chen J."/>
            <person name="Chertkov O."/>
            <person name="Cleland C."/>
            <person name="Dimitrijevic M."/>
            <person name="Doggett N.A."/>
            <person name="Fawcett J.J."/>
            <person name="Glavina T."/>
            <person name="Goodwin L.A."/>
            <person name="Hill K.K."/>
            <person name="Hitchcock P."/>
            <person name="Jackson P.J."/>
            <person name="Keim P."/>
            <person name="Kewalramani A.R."/>
            <person name="Longmire J."/>
            <person name="Lucas S."/>
            <person name="Malfatti S."/>
            <person name="McMurry K."/>
            <person name="Meincke L.J."/>
            <person name="Misra M."/>
            <person name="Moseman B.L."/>
            <person name="Mundt M."/>
            <person name="Munk A.C."/>
            <person name="Okinaka R.T."/>
            <person name="Parson-Quintana B."/>
            <person name="Reilly L.P."/>
            <person name="Richardson P."/>
            <person name="Robinson D.L."/>
            <person name="Rubin E."/>
            <person name="Saunders E."/>
            <person name="Tapia R."/>
            <person name="Tesmer J.G."/>
            <person name="Thayer N."/>
            <person name="Thompson L.S."/>
            <person name="Tice H."/>
            <person name="Ticknor L.O."/>
            <person name="Wills P.L."/>
            <person name="Brettin T.S."/>
            <person name="Gilna P."/>
        </authorList>
    </citation>
    <scope>NUCLEOTIDE SEQUENCE [LARGE SCALE GENOMIC DNA]</scope>
    <source>
        <strain>97-27</strain>
    </source>
</reference>
<evidence type="ECO:0000255" key="1">
    <source>
        <dbReference type="HAMAP-Rule" id="MF_00158"/>
    </source>
</evidence>
<keyword id="KW-0067">ATP-binding</keyword>
<keyword id="KW-0963">Cytoplasm</keyword>
<keyword id="KW-0436">Ligase</keyword>
<keyword id="KW-0547">Nucleotide-binding</keyword>
<keyword id="KW-0566">Pantothenate biosynthesis</keyword>